<reference key="1">
    <citation type="journal article" date="1993" name="J. Biol. Chem.">
        <title>Cloning and expression of a novel cyclic GMP-dependent protein kinase from mouse brain.</title>
        <authorList>
            <person name="Uhler M.D."/>
        </authorList>
    </citation>
    <scope>NUCLEOTIDE SEQUENCE [MRNA]</scope>
    <source>
        <strain>C57BL/6J</strain>
        <tissue>Brain</tissue>
    </source>
</reference>
<reference key="2">
    <citation type="journal article" date="1996" name="Science">
        <title>Intestinal secretory defects and dwarfism in mice lacking cGMP-dependent protein kinase II.</title>
        <authorList>
            <person name="Pfeifer A."/>
            <person name="Aszodi A."/>
            <person name="Seidler U."/>
            <person name="Ruth P."/>
            <person name="Hofmann F."/>
            <person name="Faessler R."/>
        </authorList>
    </citation>
    <scope>FUNCTION</scope>
    <scope>DISRUPTION PHENOTYPE</scope>
</reference>
<reference key="3">
    <citation type="journal article" date="2009" name="J. Biol. Chem.">
        <title>Type II cGMP-dependent protein kinase mediates osteoblast mechanotransduction.</title>
        <authorList>
            <person name="Rangaswami H."/>
            <person name="Marathe N."/>
            <person name="Zhuang S."/>
            <person name="Chen Y."/>
            <person name="Yeh J.C."/>
            <person name="Frangos J.A."/>
            <person name="Boss G.R."/>
            <person name="Pilz R.B."/>
        </authorList>
    </citation>
    <scope>FUNCTION</scope>
    <scope>ACTIVITY REGULATION</scope>
    <scope>SUBCELLULAR LOCATION</scope>
</reference>
<reference key="4">
    <citation type="journal article" date="2010" name="Cell">
        <title>A tissue-specific atlas of mouse protein phosphorylation and expression.</title>
        <authorList>
            <person name="Huttlin E.L."/>
            <person name="Jedrychowski M.P."/>
            <person name="Elias J.E."/>
            <person name="Goswami T."/>
            <person name="Rad R."/>
            <person name="Beausoleil S.A."/>
            <person name="Villen J."/>
            <person name="Haas W."/>
            <person name="Sowa M.E."/>
            <person name="Gygi S.P."/>
        </authorList>
    </citation>
    <scope>PHOSPHORYLATION [LARGE SCALE ANALYSIS] AT THR-609</scope>
    <scope>IDENTIFICATION BY MASS SPECTROMETRY [LARGE SCALE ANALYSIS]</scope>
    <source>
        <tissue>Brain</tissue>
        <tissue>Lung</tissue>
    </source>
</reference>
<feature type="initiator methionine" description="Removed">
    <location>
        <position position="1"/>
    </location>
</feature>
<feature type="chain" id="PRO_0000086124" description="cGMP-dependent protein kinase 2">
    <location>
        <begin position="2"/>
        <end position="762"/>
    </location>
</feature>
<feature type="domain" description="Protein kinase" evidence="5">
    <location>
        <begin position="453"/>
        <end position="711"/>
    </location>
</feature>
<feature type="domain" description="AGC-kinase C-terminal" evidence="6">
    <location>
        <begin position="712"/>
        <end position="762"/>
    </location>
</feature>
<feature type="region of interest" description="Disordered" evidence="8">
    <location>
        <begin position="1"/>
        <end position="26"/>
    </location>
</feature>
<feature type="region of interest" description="Disordered" evidence="8">
    <location>
        <begin position="118"/>
        <end position="138"/>
    </location>
</feature>
<feature type="region of interest" description="cGMP-binding, high affinity; cAMP-binding, moderate affinity" evidence="2">
    <location>
        <begin position="168"/>
        <end position="283"/>
    </location>
</feature>
<feature type="region of interest" description="cGMP-binding, high affinity; cAMP-binding, low affinity" evidence="2">
    <location>
        <begin position="286"/>
        <end position="416"/>
    </location>
</feature>
<feature type="region of interest" description="Disordered" evidence="8">
    <location>
        <begin position="740"/>
        <end position="762"/>
    </location>
</feature>
<feature type="active site" description="Proton acceptor" evidence="5 7">
    <location>
        <position position="576"/>
    </location>
</feature>
<feature type="binding site" evidence="2">
    <location>
        <begin position="232"/>
        <end position="235"/>
    </location>
    <ligand>
        <name>3',5'-cyclic GMP</name>
        <dbReference type="ChEBI" id="CHEBI:57746"/>
        <label>1</label>
    </ligand>
</feature>
<feature type="binding site" evidence="2">
    <location>
        <begin position="242"/>
        <end position="243"/>
    </location>
    <ligand>
        <name>3',5'-cyclic GMP</name>
        <dbReference type="ChEBI" id="CHEBI:57746"/>
        <label>1</label>
    </ligand>
</feature>
<feature type="binding site" evidence="2">
    <location>
        <position position="347"/>
    </location>
    <ligand>
        <name>3',5'-cyclic GMP</name>
        <dbReference type="ChEBI" id="CHEBI:57746"/>
        <label>2</label>
    </ligand>
</feature>
<feature type="binding site" evidence="2">
    <location>
        <begin position="356"/>
        <end position="359"/>
    </location>
    <ligand>
        <name>3',5'-cyclic GMP</name>
        <dbReference type="ChEBI" id="CHEBI:57746"/>
        <label>2</label>
    </ligand>
</feature>
<feature type="binding site" evidence="2">
    <location>
        <begin position="366"/>
        <end position="367"/>
    </location>
    <ligand>
        <name>3',5'-cyclic GMP</name>
        <dbReference type="ChEBI" id="CHEBI:57746"/>
        <label>2</label>
    </ligand>
</feature>
<feature type="binding site" evidence="2">
    <location>
        <position position="412"/>
    </location>
    <ligand>
        <name>3',5'-cyclic GMP</name>
        <dbReference type="ChEBI" id="CHEBI:57746"/>
        <label>2</label>
    </ligand>
</feature>
<feature type="binding site" evidence="2">
    <location>
        <position position="415"/>
    </location>
    <ligand>
        <name>3',5'-cyclic GMP</name>
        <dbReference type="ChEBI" id="CHEBI:57746"/>
        <label>2</label>
    </ligand>
</feature>
<feature type="binding site" evidence="5">
    <location>
        <begin position="459"/>
        <end position="467"/>
    </location>
    <ligand>
        <name>ATP</name>
        <dbReference type="ChEBI" id="CHEBI:30616"/>
    </ligand>
</feature>
<feature type="binding site" evidence="5">
    <location>
        <position position="482"/>
    </location>
    <ligand>
        <name>ATP</name>
        <dbReference type="ChEBI" id="CHEBI:30616"/>
    </ligand>
</feature>
<feature type="modified residue" description="Phosphoserine" evidence="3">
    <location>
        <position position="110"/>
    </location>
</feature>
<feature type="modified residue" description="Phosphoserine" evidence="3">
    <location>
        <position position="117"/>
    </location>
</feature>
<feature type="modified residue" description="Phosphoserine" evidence="3">
    <location>
        <position position="431"/>
    </location>
</feature>
<feature type="modified residue" description="Phosphothreonine" evidence="13">
    <location>
        <position position="609"/>
    </location>
</feature>
<feature type="lipid moiety-binding region" description="N-myristoyl glycine" evidence="2">
    <location>
        <position position="2"/>
    </location>
</feature>
<proteinExistence type="evidence at protein level"/>
<keyword id="KW-0067">ATP-binding</keyword>
<keyword id="KW-1003">Cell membrane</keyword>
<keyword id="KW-0140">cGMP</keyword>
<keyword id="KW-0142">cGMP-binding</keyword>
<keyword id="KW-0418">Kinase</keyword>
<keyword id="KW-0449">Lipoprotein</keyword>
<keyword id="KW-0472">Membrane</keyword>
<keyword id="KW-0519">Myristate</keyword>
<keyword id="KW-0547">Nucleotide-binding</keyword>
<keyword id="KW-0597">Phosphoprotein</keyword>
<keyword id="KW-1185">Reference proteome</keyword>
<keyword id="KW-0723">Serine/threonine-protein kinase</keyword>
<keyword id="KW-0808">Transferase</keyword>
<organism>
    <name type="scientific">Mus musculus</name>
    <name type="common">Mouse</name>
    <dbReference type="NCBI Taxonomy" id="10090"/>
    <lineage>
        <taxon>Eukaryota</taxon>
        <taxon>Metazoa</taxon>
        <taxon>Chordata</taxon>
        <taxon>Craniata</taxon>
        <taxon>Vertebrata</taxon>
        <taxon>Euteleostomi</taxon>
        <taxon>Mammalia</taxon>
        <taxon>Eutheria</taxon>
        <taxon>Euarchontoglires</taxon>
        <taxon>Glires</taxon>
        <taxon>Rodentia</taxon>
        <taxon>Myomorpha</taxon>
        <taxon>Muroidea</taxon>
        <taxon>Muridae</taxon>
        <taxon>Murinae</taxon>
        <taxon>Mus</taxon>
        <taxon>Mus</taxon>
    </lineage>
</organism>
<dbReference type="EC" id="2.7.11.12"/>
<dbReference type="EMBL" id="L12460">
    <property type="protein sequence ID" value="AAA02572.1"/>
    <property type="molecule type" value="mRNA"/>
</dbReference>
<dbReference type="CCDS" id="CCDS19459.1"/>
<dbReference type="PIR" id="A46590">
    <property type="entry name" value="A46590"/>
</dbReference>
<dbReference type="SMR" id="Q61410"/>
<dbReference type="FunCoup" id="Q61410">
    <property type="interactions" value="72"/>
</dbReference>
<dbReference type="STRING" id="10090.ENSMUSP00000124963"/>
<dbReference type="GlyGen" id="Q61410">
    <property type="glycosylation" value="1 site, 1 N-linked glycan (1 site)"/>
</dbReference>
<dbReference type="iPTMnet" id="Q61410"/>
<dbReference type="PhosphoSitePlus" id="Q61410"/>
<dbReference type="jPOST" id="Q61410"/>
<dbReference type="PaxDb" id="10090-ENSMUSP00000124963"/>
<dbReference type="ProteomicsDB" id="263596"/>
<dbReference type="AGR" id="MGI:108173"/>
<dbReference type="MGI" id="MGI:108173">
    <property type="gene designation" value="Prkg2"/>
</dbReference>
<dbReference type="eggNOG" id="KOG0614">
    <property type="taxonomic scope" value="Eukaryota"/>
</dbReference>
<dbReference type="InParanoid" id="Q61410"/>
<dbReference type="BRENDA" id="2.7.11.12">
    <property type="organism ID" value="3474"/>
</dbReference>
<dbReference type="Reactome" id="R-MMU-1474151">
    <property type="pathway name" value="Tetrahydrobiopterin (BH4) synthesis, recycling, salvage and regulation"/>
</dbReference>
<dbReference type="Reactome" id="R-MMU-418457">
    <property type="pathway name" value="cGMP effects"/>
</dbReference>
<dbReference type="Reactome" id="R-MMU-9648002">
    <property type="pathway name" value="RAS processing"/>
</dbReference>
<dbReference type="CD-CODE" id="CE726F99">
    <property type="entry name" value="Postsynaptic density"/>
</dbReference>
<dbReference type="ChiTaRS" id="Prkg2">
    <property type="organism name" value="mouse"/>
</dbReference>
<dbReference type="PRO" id="PR:Q61410"/>
<dbReference type="Proteomes" id="UP000000589">
    <property type="component" value="Unplaced"/>
</dbReference>
<dbReference type="RNAct" id="Q61410">
    <property type="molecule type" value="protein"/>
</dbReference>
<dbReference type="GO" id="GO:0016324">
    <property type="term" value="C:apical plasma membrane"/>
    <property type="evidence" value="ECO:0007669"/>
    <property type="project" value="UniProtKB-SubCell"/>
</dbReference>
<dbReference type="GO" id="GO:0005886">
    <property type="term" value="C:plasma membrane"/>
    <property type="evidence" value="ECO:0000314"/>
    <property type="project" value="MGI"/>
</dbReference>
<dbReference type="GO" id="GO:0005524">
    <property type="term" value="F:ATP binding"/>
    <property type="evidence" value="ECO:0007669"/>
    <property type="project" value="UniProtKB-KW"/>
</dbReference>
<dbReference type="GO" id="GO:0030553">
    <property type="term" value="F:cGMP binding"/>
    <property type="evidence" value="ECO:0007669"/>
    <property type="project" value="UniProtKB-KW"/>
</dbReference>
<dbReference type="GO" id="GO:0004692">
    <property type="term" value="F:cGMP-dependent protein kinase activity"/>
    <property type="evidence" value="ECO:0000315"/>
    <property type="project" value="MGI"/>
</dbReference>
<dbReference type="GO" id="GO:0051019">
    <property type="term" value="F:mitogen-activated protein kinase binding"/>
    <property type="evidence" value="ECO:0000250"/>
    <property type="project" value="UniProtKB"/>
</dbReference>
<dbReference type="GO" id="GO:0106310">
    <property type="term" value="F:protein serine kinase activity"/>
    <property type="evidence" value="ECO:0000250"/>
    <property type="project" value="UniProtKB"/>
</dbReference>
<dbReference type="GO" id="GO:0071476">
    <property type="term" value="P:cellular hypotonic response"/>
    <property type="evidence" value="ECO:0000314"/>
    <property type="project" value="CAFA"/>
</dbReference>
<dbReference type="GO" id="GO:0032922">
    <property type="term" value="P:circadian regulation of gene expression"/>
    <property type="evidence" value="ECO:0000315"/>
    <property type="project" value="MGI"/>
</dbReference>
<dbReference type="GO" id="GO:0007623">
    <property type="term" value="P:circadian rhythm"/>
    <property type="evidence" value="ECO:0000315"/>
    <property type="project" value="MGI"/>
</dbReference>
<dbReference type="GO" id="GO:0045794">
    <property type="term" value="P:negative regulation of cell volume"/>
    <property type="evidence" value="ECO:0000316"/>
    <property type="project" value="CAFA"/>
</dbReference>
<dbReference type="GO" id="GO:0062013">
    <property type="term" value="P:positive regulation of small molecule metabolic process"/>
    <property type="evidence" value="ECO:0000266"/>
    <property type="project" value="MGI"/>
</dbReference>
<dbReference type="CDD" id="cd00038">
    <property type="entry name" value="CAP_ED"/>
    <property type="match status" value="2"/>
</dbReference>
<dbReference type="CDD" id="cd05572">
    <property type="entry name" value="STKc_cGK"/>
    <property type="match status" value="1"/>
</dbReference>
<dbReference type="FunFam" id="3.30.200.20:FF:000005">
    <property type="entry name" value="cAMP-dependent protein kinase catalytic subunit"/>
    <property type="match status" value="1"/>
</dbReference>
<dbReference type="FunFam" id="1.10.510.10:FF:000096">
    <property type="entry name" value="cGMP-dependent protein kinase"/>
    <property type="match status" value="1"/>
</dbReference>
<dbReference type="FunFam" id="2.60.120.10:FF:000038">
    <property type="entry name" value="cGMP-dependent protein kinase"/>
    <property type="match status" value="1"/>
</dbReference>
<dbReference type="FunFam" id="2.60.120.10:FF:000043">
    <property type="entry name" value="cGMP-dependent protein kinase"/>
    <property type="match status" value="1"/>
</dbReference>
<dbReference type="Gene3D" id="2.60.120.10">
    <property type="entry name" value="Jelly Rolls"/>
    <property type="match status" value="2"/>
</dbReference>
<dbReference type="Gene3D" id="3.30.200.20">
    <property type="entry name" value="Phosphorylase Kinase, domain 1"/>
    <property type="match status" value="1"/>
</dbReference>
<dbReference type="Gene3D" id="1.10.510.10">
    <property type="entry name" value="Transferase(Phosphotransferase) domain 1"/>
    <property type="match status" value="1"/>
</dbReference>
<dbReference type="InterPro" id="IPR000961">
    <property type="entry name" value="AGC-kinase_C"/>
</dbReference>
<dbReference type="InterPro" id="IPR002374">
    <property type="entry name" value="cGMP_dep_kinase"/>
</dbReference>
<dbReference type="InterPro" id="IPR018488">
    <property type="entry name" value="cNMP-bd_CS"/>
</dbReference>
<dbReference type="InterPro" id="IPR000595">
    <property type="entry name" value="cNMP-bd_dom"/>
</dbReference>
<dbReference type="InterPro" id="IPR018490">
    <property type="entry name" value="cNMP-bd_dom_sf"/>
</dbReference>
<dbReference type="InterPro" id="IPR011009">
    <property type="entry name" value="Kinase-like_dom_sf"/>
</dbReference>
<dbReference type="InterPro" id="IPR000719">
    <property type="entry name" value="Prot_kinase_dom"/>
</dbReference>
<dbReference type="InterPro" id="IPR017441">
    <property type="entry name" value="Protein_kinase_ATP_BS"/>
</dbReference>
<dbReference type="InterPro" id="IPR014710">
    <property type="entry name" value="RmlC-like_jellyroll"/>
</dbReference>
<dbReference type="InterPro" id="IPR008271">
    <property type="entry name" value="Ser/Thr_kinase_AS"/>
</dbReference>
<dbReference type="InterPro" id="IPR035014">
    <property type="entry name" value="STKc_cGK"/>
</dbReference>
<dbReference type="PANTHER" id="PTHR24353:SF24">
    <property type="match status" value="1"/>
</dbReference>
<dbReference type="PANTHER" id="PTHR24353">
    <property type="entry name" value="CYCLIC NUCLEOTIDE-DEPENDENT PROTEIN KINASE"/>
    <property type="match status" value="1"/>
</dbReference>
<dbReference type="Pfam" id="PF00027">
    <property type="entry name" value="cNMP_binding"/>
    <property type="match status" value="2"/>
</dbReference>
<dbReference type="Pfam" id="PF00069">
    <property type="entry name" value="Pkinase"/>
    <property type="match status" value="1"/>
</dbReference>
<dbReference type="PIRSF" id="PIRSF000559">
    <property type="entry name" value="cGMP-dep_kinase"/>
    <property type="match status" value="1"/>
</dbReference>
<dbReference type="PRINTS" id="PR00104">
    <property type="entry name" value="CGMPKINASE"/>
</dbReference>
<dbReference type="SMART" id="SM00100">
    <property type="entry name" value="cNMP"/>
    <property type="match status" value="2"/>
</dbReference>
<dbReference type="SMART" id="SM00133">
    <property type="entry name" value="S_TK_X"/>
    <property type="match status" value="1"/>
</dbReference>
<dbReference type="SMART" id="SM00220">
    <property type="entry name" value="S_TKc"/>
    <property type="match status" value="1"/>
</dbReference>
<dbReference type="SUPFAM" id="SSF51206">
    <property type="entry name" value="cAMP-binding domain-like"/>
    <property type="match status" value="2"/>
</dbReference>
<dbReference type="SUPFAM" id="SSF56112">
    <property type="entry name" value="Protein kinase-like (PK-like)"/>
    <property type="match status" value="1"/>
</dbReference>
<dbReference type="PROSITE" id="PS51285">
    <property type="entry name" value="AGC_KINASE_CTER"/>
    <property type="match status" value="1"/>
</dbReference>
<dbReference type="PROSITE" id="PS00888">
    <property type="entry name" value="CNMP_BINDING_1"/>
    <property type="match status" value="2"/>
</dbReference>
<dbReference type="PROSITE" id="PS00889">
    <property type="entry name" value="CNMP_BINDING_2"/>
    <property type="match status" value="2"/>
</dbReference>
<dbReference type="PROSITE" id="PS50042">
    <property type="entry name" value="CNMP_BINDING_3"/>
    <property type="match status" value="2"/>
</dbReference>
<dbReference type="PROSITE" id="PS00107">
    <property type="entry name" value="PROTEIN_KINASE_ATP"/>
    <property type="match status" value="1"/>
</dbReference>
<dbReference type="PROSITE" id="PS50011">
    <property type="entry name" value="PROTEIN_KINASE_DOM"/>
    <property type="match status" value="1"/>
</dbReference>
<dbReference type="PROSITE" id="PS00108">
    <property type="entry name" value="PROTEIN_KINASE_ST"/>
    <property type="match status" value="1"/>
</dbReference>
<comment type="function">
    <text evidence="3 9 10">Crucial regulator of intestinal secretion and bone growth (PubMed:8953039). Phosphorylates and activates CFTR on the plasma membrane. Plays a key role in intestinal secretion by regulating cGMP-dependent translocation of CFTR in jejunum (By similarity). Acts downstream of NMDAR to activate the plasma membrane accumulation of GRIA1/GLUR1 in synapse and increase synaptic plasticity. Phosphorylates GRIA1/GLUR1 at Ser-863 (By similarity). Acts as a regulator of gene expression and activator of the extracellular signal-regulated kinases MAPK3/ERK1 and MAPK1/ERK2 in mechanically stimulated osteoblasts. Under fluid shear stress, mediates ERK activation and subsequent induction of FOS, FOSL1/FRA1, FOSL2/FRA2 and FOSB that play a key role in the osteoblast anabolic response to mechanical stimulation (PubMed:19282289).</text>
</comment>
<comment type="catalytic activity">
    <reaction>
        <text>L-seryl-[protein] + ATP = O-phospho-L-seryl-[protein] + ADP + H(+)</text>
        <dbReference type="Rhea" id="RHEA:17989"/>
        <dbReference type="Rhea" id="RHEA-COMP:9863"/>
        <dbReference type="Rhea" id="RHEA-COMP:11604"/>
        <dbReference type="ChEBI" id="CHEBI:15378"/>
        <dbReference type="ChEBI" id="CHEBI:29999"/>
        <dbReference type="ChEBI" id="CHEBI:30616"/>
        <dbReference type="ChEBI" id="CHEBI:83421"/>
        <dbReference type="ChEBI" id="CHEBI:456216"/>
        <dbReference type="EC" id="2.7.11.12"/>
    </reaction>
</comment>
<comment type="catalytic activity">
    <reaction>
        <text>L-threonyl-[protein] + ATP = O-phospho-L-threonyl-[protein] + ADP + H(+)</text>
        <dbReference type="Rhea" id="RHEA:46608"/>
        <dbReference type="Rhea" id="RHEA-COMP:11060"/>
        <dbReference type="Rhea" id="RHEA-COMP:11605"/>
        <dbReference type="ChEBI" id="CHEBI:15378"/>
        <dbReference type="ChEBI" id="CHEBI:30013"/>
        <dbReference type="ChEBI" id="CHEBI:30616"/>
        <dbReference type="ChEBI" id="CHEBI:61977"/>
        <dbReference type="ChEBI" id="CHEBI:456216"/>
        <dbReference type="EC" id="2.7.11.12"/>
    </reaction>
</comment>
<comment type="activity regulation">
    <text evidence="12">Binding of cGMP results in enzyme activation.</text>
</comment>
<comment type="subunit">
    <text evidence="3">Interacts with GRIA1/GLUR1.</text>
</comment>
<comment type="subcellular location">
    <subcellularLocation>
        <location evidence="2">Apical cell membrane</location>
        <topology evidence="4">Lipid-anchor</topology>
    </subcellularLocation>
    <subcellularLocation>
        <location evidence="9">Cell membrane</location>
        <topology evidence="4">Lipid-anchor</topology>
    </subcellularLocation>
</comment>
<comment type="PTM">
    <text evidence="1">Myristoylation mediates membrane localization.</text>
</comment>
<comment type="disruption phenotype">
    <text evidence="10">Dwarfism, caused by a severe defect in endochondral ossification at the growth plates.</text>
</comment>
<comment type="similarity">
    <text evidence="11">Belongs to the protein kinase superfamily. AGC Ser/Thr protein kinase family. cGMP subfamily.</text>
</comment>
<evidence type="ECO:0000250" key="1"/>
<evidence type="ECO:0000250" key="2">
    <source>
        <dbReference type="UniProtKB" id="Q13237"/>
    </source>
</evidence>
<evidence type="ECO:0000250" key="3">
    <source>
        <dbReference type="UniProtKB" id="Q64595"/>
    </source>
</evidence>
<evidence type="ECO:0000255" key="4"/>
<evidence type="ECO:0000255" key="5">
    <source>
        <dbReference type="PROSITE-ProRule" id="PRU00159"/>
    </source>
</evidence>
<evidence type="ECO:0000255" key="6">
    <source>
        <dbReference type="PROSITE-ProRule" id="PRU00618"/>
    </source>
</evidence>
<evidence type="ECO:0000255" key="7">
    <source>
        <dbReference type="PROSITE-ProRule" id="PRU10027"/>
    </source>
</evidence>
<evidence type="ECO:0000256" key="8">
    <source>
        <dbReference type="SAM" id="MobiDB-lite"/>
    </source>
</evidence>
<evidence type="ECO:0000269" key="9">
    <source>
    </source>
</evidence>
<evidence type="ECO:0000269" key="10">
    <source>
    </source>
</evidence>
<evidence type="ECO:0000305" key="11"/>
<evidence type="ECO:0000305" key="12">
    <source>
    </source>
</evidence>
<evidence type="ECO:0007744" key="13">
    <source>
    </source>
</evidence>
<accession>Q61410</accession>
<name>KGP2_MOUSE</name>
<sequence>MGNGSVKPKHAKHPDGHSGNLSNEALRSKVLELERELRRKDAELQEREYHLKELREQLAKQTVAIAELTEELQSKCIQLNKLQDVIHVQGGSPLQASPDKVPLDVHRKTSGLVSLHSRRGAKAGVSAEPTTRTYDLNKPPEFSFEKARVRKDSSEKKLITDALNKNQFLKRLDPQQIKDMVECMYGEKLSTGSYVIKQGEPGNHIFVLAEGRLEVFQGEKLLSSIPMWTTFGELAILYNCTRTASVKAITNVKTWALDREVFQNIMRRTAQARDEEYRNFLRSVSLLKNLPEDKLTKIIDCLEVEYYDKGDYIIREGEEGSTFFILAKGKVKVTQSTEGHDQPQLIKTLQKGEYFGEKALISDDVRSANIIAEENDVACLVIDRETFNQTVGTFDELQKYLEGYVATLNRDDEKRHAKRSMSSWKLSKALSLEMIQLKEKVARFSSTSPFQNLEIIATLGVGGFGRVELVKVKNENVAFAMKCIRKKHIVDTKQQEHVYSEKRILEELCSPFIVKLYRTFKDNKYVYMLLEACLGGELWSILRDRGSFDEPTSKFCVACVTEAFDYLHLLGIIYRDLKPENLILDADGYLKLVDFGFAKKIGSGQKTWTFCGTPEYVAPEVILNKGHDFSVDFWSLGILVYELLTGNPPFSGIDQMMTYNLILKGIEKMDFPRKITRRPEDLIRRLCRQNPTERLGNLKNGINDIKKHRWLNGFNWEGLKARSLPSPLRRELSGPIDHSYFDKYPPEKGVPPDEMSGWDKDF</sequence>
<protein>
    <recommendedName>
        <fullName>cGMP-dependent protein kinase 2</fullName>
        <shortName>cGK 2</shortName>
        <shortName>cGK2</shortName>
        <ecNumber>2.7.11.12</ecNumber>
    </recommendedName>
    <alternativeName>
        <fullName>cGMP-dependent protein kinase II</fullName>
        <shortName>cGKII</shortName>
    </alternativeName>
</protein>
<gene>
    <name type="primary">Prkg2</name>
    <name type="synonym">Prkgr2</name>
</gene>